<proteinExistence type="inferred from homology"/>
<keyword id="KW-0997">Cell inner membrane</keyword>
<keyword id="KW-1003">Cell membrane</keyword>
<keyword id="KW-0472">Membrane</keyword>
<keyword id="KW-1185">Reference proteome</keyword>
<comment type="function">
    <text evidence="1">Interacts with the SecY protein in vivo. May bind preferentially to an uncomplexed state of SecY, thus functioning either as a chelating agent for excess SecY in the cell or as a regulatory factor that negatively controls the translocase function.</text>
</comment>
<comment type="subcellular location">
    <subcellularLocation>
        <location evidence="1">Cell inner membrane</location>
        <topology evidence="1">Peripheral membrane protein</topology>
        <orientation evidence="1">Cytoplasmic side</orientation>
    </subcellularLocation>
    <text evidence="1">Loosely associated with the cytoplasmic side of the inner membrane, probably via SecY.</text>
</comment>
<comment type="similarity">
    <text evidence="1">Belongs to the Syd family.</text>
</comment>
<feature type="chain" id="PRO_0000214135" description="Protein Syd">
    <location>
        <begin position="1"/>
        <end position="182"/>
    </location>
</feature>
<protein>
    <recommendedName>
        <fullName evidence="1">Protein Syd</fullName>
    </recommendedName>
</protein>
<reference key="1">
    <citation type="journal article" date="2004" name="Proc. Natl. Acad. Sci. U.S.A.">
        <title>Genome sequence of the enterobacterial phytopathogen Erwinia carotovora subsp. atroseptica and characterization of virulence factors.</title>
        <authorList>
            <person name="Bell K.S."/>
            <person name="Sebaihia M."/>
            <person name="Pritchard L."/>
            <person name="Holden M.T.G."/>
            <person name="Hyman L.J."/>
            <person name="Holeva M.C."/>
            <person name="Thomson N.R."/>
            <person name="Bentley S.D."/>
            <person name="Churcher L.J.C."/>
            <person name="Mungall K."/>
            <person name="Atkin R."/>
            <person name="Bason N."/>
            <person name="Brooks K."/>
            <person name="Chillingworth T."/>
            <person name="Clark K."/>
            <person name="Doggett J."/>
            <person name="Fraser A."/>
            <person name="Hance Z."/>
            <person name="Hauser H."/>
            <person name="Jagels K."/>
            <person name="Moule S."/>
            <person name="Norbertczak H."/>
            <person name="Ormond D."/>
            <person name="Price C."/>
            <person name="Quail M.A."/>
            <person name="Sanders M."/>
            <person name="Walker D."/>
            <person name="Whitehead S."/>
            <person name="Salmond G.P.C."/>
            <person name="Birch P.R.J."/>
            <person name="Parkhill J."/>
            <person name="Toth I.K."/>
        </authorList>
    </citation>
    <scope>NUCLEOTIDE SEQUENCE [LARGE SCALE GENOMIC DNA]</scope>
    <source>
        <strain>SCRI 1043 / ATCC BAA-672</strain>
    </source>
</reference>
<name>SYDP_PECAS</name>
<gene>
    <name evidence="1" type="primary">syd</name>
    <name type="ordered locus">ECA1021</name>
</gene>
<dbReference type="EMBL" id="BX950851">
    <property type="protein sequence ID" value="CAG73932.1"/>
    <property type="molecule type" value="Genomic_DNA"/>
</dbReference>
<dbReference type="RefSeq" id="WP_011092620.1">
    <property type="nucleotide sequence ID" value="NC_004547.2"/>
</dbReference>
<dbReference type="SMR" id="Q6D8F3"/>
<dbReference type="STRING" id="218491.ECA1021"/>
<dbReference type="GeneID" id="57207850"/>
<dbReference type="KEGG" id="eca:ECA1021"/>
<dbReference type="PATRIC" id="fig|218491.5.peg.1029"/>
<dbReference type="eggNOG" id="ENOG502ZCMR">
    <property type="taxonomic scope" value="Bacteria"/>
</dbReference>
<dbReference type="HOGENOM" id="CLU_121866_0_0_6"/>
<dbReference type="OrthoDB" id="5599437at2"/>
<dbReference type="Proteomes" id="UP000007966">
    <property type="component" value="Chromosome"/>
</dbReference>
<dbReference type="GO" id="GO:0009898">
    <property type="term" value="C:cytoplasmic side of plasma membrane"/>
    <property type="evidence" value="ECO:0007669"/>
    <property type="project" value="InterPro"/>
</dbReference>
<dbReference type="CDD" id="cd16323">
    <property type="entry name" value="Syd"/>
    <property type="match status" value="1"/>
</dbReference>
<dbReference type="Gene3D" id="3.40.1580.20">
    <property type="entry name" value="Syd protein"/>
    <property type="match status" value="1"/>
</dbReference>
<dbReference type="HAMAP" id="MF_01104">
    <property type="entry name" value="Syd"/>
    <property type="match status" value="1"/>
</dbReference>
<dbReference type="InterPro" id="IPR009948">
    <property type="entry name" value="Syd"/>
</dbReference>
<dbReference type="InterPro" id="IPR038228">
    <property type="entry name" value="Syd_sf"/>
</dbReference>
<dbReference type="NCBIfam" id="NF003439">
    <property type="entry name" value="PRK04968.1"/>
    <property type="match status" value="1"/>
</dbReference>
<dbReference type="Pfam" id="PF07348">
    <property type="entry name" value="Syd"/>
    <property type="match status" value="1"/>
</dbReference>
<organism>
    <name type="scientific">Pectobacterium atrosepticum (strain SCRI 1043 / ATCC BAA-672)</name>
    <name type="common">Erwinia carotovora subsp. atroseptica</name>
    <dbReference type="NCBI Taxonomy" id="218491"/>
    <lineage>
        <taxon>Bacteria</taxon>
        <taxon>Pseudomonadati</taxon>
        <taxon>Pseudomonadota</taxon>
        <taxon>Gammaproteobacteria</taxon>
        <taxon>Enterobacterales</taxon>
        <taxon>Pectobacteriaceae</taxon>
        <taxon>Pectobacterium</taxon>
    </lineage>
</organism>
<evidence type="ECO:0000255" key="1">
    <source>
        <dbReference type="HAMAP-Rule" id="MF_01104"/>
    </source>
</evidence>
<accession>Q6D8F3</accession>
<sequence>MEHEVVSALAAFTQRYVACWQQEKGHLPASEALYGIPSPCIVENHEDTVYWSPQPFAPSVALDGVERALEISLHPDVHAFYTAQYAGDMAAQFDSLSCQLLQVWSEEDFTRMQENLIGHLLTQKRLKLTPTLFLATTDSEMTMVSLCNVSGEIVLEAFGTKKRQHLAPTLAAFLSGLNPLAV</sequence>